<comment type="function">
    <text evidence="4">Lytic polysaccharide monooxygenase (LPMO) that depolymerizes chitin via the oxidation of scissile beta-(1-4)-glycosidic bonds, yielding C1 or C4 oxidation products (PubMed:24362702). Catalysis by LPMOs requires the reduction of the active-site copper from Cu(II) to Cu(I) by a reducing agent and H(2)O(2) or O(2) as a cosubstrate (PubMed:24362702). Active on chitin but has no activity on other substrates, including diverse mannans, cellulose and starch (data not shown) (PubMed:24362702). Primary chain cleavage yields predominantly aldonic acid oligosaccharides with even-numbered degrees of polymerization (PubMed:24362702).</text>
</comment>
<comment type="cofactor">
    <cofactor evidence="4">
        <name>Cu(2+)</name>
        <dbReference type="ChEBI" id="CHEBI:29036"/>
    </cofactor>
    <text evidence="4">Binds 1 copper ion per subunit.</text>
</comment>
<comment type="similarity">
    <text evidence="6">Belongs to the polysaccharide monooxygenase AA11 family.</text>
</comment>
<keyword id="KW-0002">3D-structure</keyword>
<keyword id="KW-0119">Carbohydrate metabolism</keyword>
<keyword id="KW-0146">Chitin degradation</keyword>
<keyword id="KW-1015">Disulfide bond</keyword>
<keyword id="KW-0325">Glycoprotein</keyword>
<keyword id="KW-0479">Metal-binding</keyword>
<keyword id="KW-0503">Monooxygenase</keyword>
<keyword id="KW-0560">Oxidoreductase</keyword>
<keyword id="KW-0624">Polysaccharide degradation</keyword>
<keyword id="KW-1185">Reference proteome</keyword>
<keyword id="KW-0732">Signal</keyword>
<keyword id="KW-0862">Zinc</keyword>
<reference key="1">
    <citation type="journal article" date="2005" name="Nature">
        <title>Genome sequencing and analysis of Aspergillus oryzae.</title>
        <authorList>
            <person name="Machida M."/>
            <person name="Asai K."/>
            <person name="Sano M."/>
            <person name="Tanaka T."/>
            <person name="Kumagai T."/>
            <person name="Terai G."/>
            <person name="Kusumoto K."/>
            <person name="Arima T."/>
            <person name="Akita O."/>
            <person name="Kashiwagi Y."/>
            <person name="Abe K."/>
            <person name="Gomi K."/>
            <person name="Horiuchi H."/>
            <person name="Kitamoto K."/>
            <person name="Kobayashi T."/>
            <person name="Takeuchi M."/>
            <person name="Denning D.W."/>
            <person name="Galagan J.E."/>
            <person name="Nierman W.C."/>
            <person name="Yu J."/>
            <person name="Archer D.B."/>
            <person name="Bennett J.W."/>
            <person name="Bhatnagar D."/>
            <person name="Cleveland T.E."/>
            <person name="Fedorova N.D."/>
            <person name="Gotoh O."/>
            <person name="Horikawa H."/>
            <person name="Hosoyama A."/>
            <person name="Ichinomiya M."/>
            <person name="Igarashi R."/>
            <person name="Iwashita K."/>
            <person name="Juvvadi P.R."/>
            <person name="Kato M."/>
            <person name="Kato Y."/>
            <person name="Kin T."/>
            <person name="Kokubun A."/>
            <person name="Maeda H."/>
            <person name="Maeyama N."/>
            <person name="Maruyama J."/>
            <person name="Nagasaki H."/>
            <person name="Nakajima T."/>
            <person name="Oda K."/>
            <person name="Okada K."/>
            <person name="Paulsen I."/>
            <person name="Sakamoto K."/>
            <person name="Sawano T."/>
            <person name="Takahashi M."/>
            <person name="Takase K."/>
            <person name="Terabayashi Y."/>
            <person name="Wortman J.R."/>
            <person name="Yamada O."/>
            <person name="Yamagata Y."/>
            <person name="Anazawa H."/>
            <person name="Hata Y."/>
            <person name="Koide Y."/>
            <person name="Komori T."/>
            <person name="Koyama Y."/>
            <person name="Minetoki T."/>
            <person name="Suharnan S."/>
            <person name="Tanaka A."/>
            <person name="Isono K."/>
            <person name="Kuhara S."/>
            <person name="Ogasawara N."/>
            <person name="Kikuchi H."/>
        </authorList>
    </citation>
    <scope>NUCLEOTIDE SEQUENCE [LARGE SCALE GENOMIC DNA]</scope>
    <source>
        <strain>ATCC 42149 / RIB 40</strain>
    </source>
</reference>
<reference key="2">
    <citation type="journal article" date="2014" name="Nat. Chem. Biol.">
        <title>Discovery and characterization of a new family of lytic polysaccharide monooxygenases.</title>
        <authorList>
            <person name="Hemsworth G.R."/>
            <person name="Henrissat B."/>
            <person name="Davies G.J."/>
            <person name="Walton P.H."/>
        </authorList>
    </citation>
    <scope>X-RAY CRYSTALLOGRAPHY (1.40 ANGSTROMS) OF 20-235 IN COMPLEX WITH COPPER</scope>
    <scope>DISULFIDE BONDS</scope>
    <scope>COFACTOR</scope>
    <scope>FUNCTION</scope>
    <scope>CATALYTIC ACTIVITY</scope>
</reference>
<protein>
    <recommendedName>
        <fullName evidence="5">AA11 family lytic polysaccharide monooxygenase</fullName>
        <shortName evidence="5">LPMO11</shortName>
        <ecNumber evidence="4">1.14.99.-</ecNumber>
    </recommendedName>
</protein>
<sequence>MFSKAFLSAALLGAAAVEGHMMMAQPVPYGKDTLNNSPLAADGSDFPCKLRSNTYQVTEENTAAIGQSMPLSFIGSAVHGGGSCQVSLTTDREPTKDSKWIVIKSIEGGCPANVDGNLSGGPTSTGASKFTYTIPEGIEPGKYTLAWTWFNRIGNREMYMNCAPLTVTGSSSKRDEVPKEKTVEKRSANFPPMFVANVNGCTTKEGVDIRFPNPGSIVEYAGDKSNLAAEGSQACTGTPTFGGDGNTAGSSGSSGSSSGSSSGGSSSSAAGSGATAPPAPAVSSTLVPKPSQSSAPGVFVPTGSPAQPTHTSAPSGGSSSGSGSSSGSNSGSSSGSSSSSSSSSSSGALTGSCSSEGTWNCIGGSSFQRCANGQWTAVQQMATGTECTAGQASNLKIKATNLKPRMLHEMRHRKRNYHNHA</sequence>
<feature type="signal peptide" evidence="1">
    <location>
        <begin position="1"/>
        <end position="19"/>
    </location>
</feature>
<feature type="chain" id="PRO_5004217132" description="AA11 family lytic polysaccharide monooxygenase">
    <location>
        <begin position="20"/>
        <end position="421"/>
    </location>
</feature>
<feature type="region of interest" description="Disordered" evidence="3">
    <location>
        <begin position="231"/>
        <end position="349"/>
    </location>
</feature>
<feature type="compositionally biased region" description="Low complexity" evidence="3">
    <location>
        <begin position="247"/>
        <end position="285"/>
    </location>
</feature>
<feature type="compositionally biased region" description="Polar residues" evidence="3">
    <location>
        <begin position="304"/>
        <end position="314"/>
    </location>
</feature>
<feature type="compositionally biased region" description="Low complexity" evidence="3">
    <location>
        <begin position="315"/>
        <end position="349"/>
    </location>
</feature>
<feature type="binding site" evidence="4 8">
    <location>
        <position position="20"/>
    </location>
    <ligand>
        <name>Cu(+)</name>
        <dbReference type="ChEBI" id="CHEBI:49552"/>
        <note>catalytic</note>
    </ligand>
</feature>
<feature type="binding site" evidence="4 8">
    <location>
        <position position="79"/>
    </location>
    <ligand>
        <name>Cu(+)</name>
        <dbReference type="ChEBI" id="CHEBI:49552"/>
        <note>catalytic</note>
    </ligand>
</feature>
<feature type="binding site" evidence="4 8">
    <location>
        <position position="93"/>
    </location>
    <ligand>
        <name>Cu(+)</name>
        <dbReference type="ChEBI" id="CHEBI:49552"/>
        <note>catalytic</note>
    </ligand>
</feature>
<feature type="glycosylation site" description="N-linked (GlcNAc...) asparagine" evidence="2">
    <location>
        <position position="117"/>
    </location>
</feature>
<feature type="disulfide bond" evidence="4 7 8">
    <location>
        <begin position="48"/>
        <end position="162"/>
    </location>
</feature>
<feature type="disulfide bond" evidence="4 7 8">
    <location>
        <begin position="84"/>
        <end position="110"/>
    </location>
</feature>
<feature type="disulfide bond" evidence="4 7 8">
    <location>
        <begin position="201"/>
        <end position="235"/>
    </location>
</feature>
<feature type="strand" evidence="10">
    <location>
        <begin position="21"/>
        <end position="26"/>
    </location>
</feature>
<feature type="helix" evidence="10">
    <location>
        <begin position="31"/>
        <end position="33"/>
    </location>
</feature>
<feature type="turn" evidence="10">
    <location>
        <begin position="44"/>
        <end position="49"/>
    </location>
</feature>
<feature type="turn" evidence="10">
    <location>
        <begin position="52"/>
        <end position="55"/>
    </location>
</feature>
<feature type="strand" evidence="10">
    <location>
        <begin position="61"/>
        <end position="63"/>
    </location>
</feature>
<feature type="strand" evidence="10">
    <location>
        <begin position="68"/>
        <end position="76"/>
    </location>
</feature>
<feature type="strand" evidence="10">
    <location>
        <begin position="82"/>
        <end position="90"/>
    </location>
</feature>
<feature type="strand" evidence="10">
    <location>
        <begin position="101"/>
        <end position="109"/>
    </location>
</feature>
<feature type="strand" evidence="10">
    <location>
        <begin position="130"/>
        <end position="133"/>
    </location>
</feature>
<feature type="strand" evidence="10">
    <location>
        <begin position="140"/>
        <end position="155"/>
    </location>
</feature>
<feature type="strand" evidence="10">
    <location>
        <begin position="159"/>
        <end position="168"/>
    </location>
</feature>
<feature type="strand" evidence="10">
    <location>
        <begin position="197"/>
        <end position="200"/>
    </location>
</feature>
<feature type="strand" evidence="9">
    <location>
        <begin position="218"/>
        <end position="220"/>
    </location>
</feature>
<feature type="helix" evidence="10">
    <location>
        <begin position="224"/>
        <end position="226"/>
    </location>
</feature>
<organism>
    <name type="scientific">Aspergillus oryzae (strain ATCC 42149 / RIB 40)</name>
    <name type="common">Yellow koji mold</name>
    <dbReference type="NCBI Taxonomy" id="510516"/>
    <lineage>
        <taxon>Eukaryota</taxon>
        <taxon>Fungi</taxon>
        <taxon>Dikarya</taxon>
        <taxon>Ascomycota</taxon>
        <taxon>Pezizomycotina</taxon>
        <taxon>Eurotiomycetes</taxon>
        <taxon>Eurotiomycetidae</taxon>
        <taxon>Eurotiales</taxon>
        <taxon>Aspergillaceae</taxon>
        <taxon>Aspergillus</taxon>
        <taxon>Aspergillus subgen. Circumdati</taxon>
    </lineage>
</organism>
<name>LP11_ASPOR</name>
<gene>
    <name evidence="5" type="primary">AA11</name>
    <name type="ORF">AO090102000501</name>
</gene>
<proteinExistence type="evidence at protein level"/>
<evidence type="ECO:0000255" key="1"/>
<evidence type="ECO:0000255" key="2">
    <source>
        <dbReference type="PROSITE-ProRule" id="PRU00498"/>
    </source>
</evidence>
<evidence type="ECO:0000256" key="3">
    <source>
        <dbReference type="SAM" id="MobiDB-lite"/>
    </source>
</evidence>
<evidence type="ECO:0000269" key="4">
    <source>
    </source>
</evidence>
<evidence type="ECO:0000303" key="5">
    <source>
    </source>
</evidence>
<evidence type="ECO:0000305" key="6"/>
<evidence type="ECO:0007744" key="7">
    <source>
        <dbReference type="PDB" id="4MAH"/>
    </source>
</evidence>
<evidence type="ECO:0007744" key="8">
    <source>
        <dbReference type="PDB" id="4MAI"/>
    </source>
</evidence>
<evidence type="ECO:0007829" key="9">
    <source>
        <dbReference type="PDB" id="4MAH"/>
    </source>
</evidence>
<evidence type="ECO:0007829" key="10">
    <source>
        <dbReference type="PDB" id="4MAI"/>
    </source>
</evidence>
<accession>Q2UA85</accession>
<dbReference type="EC" id="1.14.99.-" evidence="4"/>
<dbReference type="EMBL" id="AP007162">
    <property type="protein sequence ID" value="BAE61530.1"/>
    <property type="molecule type" value="Genomic_DNA"/>
</dbReference>
<dbReference type="PDB" id="4MAH">
    <property type="method" value="X-ray"/>
    <property type="resolution" value="1.55 A"/>
    <property type="chains" value="A=20-235"/>
</dbReference>
<dbReference type="PDB" id="4MAI">
    <property type="method" value="X-ray"/>
    <property type="resolution" value="1.40 A"/>
    <property type="chains" value="A=20-235"/>
</dbReference>
<dbReference type="PDBsum" id="4MAH"/>
<dbReference type="PDBsum" id="4MAI"/>
<dbReference type="SMR" id="Q2UA85"/>
<dbReference type="STRING" id="510516.Q2UA85"/>
<dbReference type="EnsemblFungi" id="BAE61530">
    <property type="protein sequence ID" value="BAE61530"/>
    <property type="gene ID" value="AO090102000501"/>
</dbReference>
<dbReference type="VEuPathDB" id="FungiDB:AO090102000501"/>
<dbReference type="HOGENOM" id="CLU_032571_1_0_1"/>
<dbReference type="OMA" id="TWFNHVG"/>
<dbReference type="BRENDA" id="1.14.99.53">
    <property type="organism ID" value="522"/>
</dbReference>
<dbReference type="EvolutionaryTrace" id="Q2UA85"/>
<dbReference type="Proteomes" id="UP000006564">
    <property type="component" value="Chromosome 4"/>
</dbReference>
<dbReference type="GO" id="GO:0046872">
    <property type="term" value="F:metal ion binding"/>
    <property type="evidence" value="ECO:0007669"/>
    <property type="project" value="UniProtKB-KW"/>
</dbReference>
<dbReference type="GO" id="GO:0004497">
    <property type="term" value="F:monooxygenase activity"/>
    <property type="evidence" value="ECO:0007669"/>
    <property type="project" value="UniProtKB-KW"/>
</dbReference>
<dbReference type="GO" id="GO:0006032">
    <property type="term" value="P:chitin catabolic process"/>
    <property type="evidence" value="ECO:0007669"/>
    <property type="project" value="UniProtKB-KW"/>
</dbReference>
<dbReference type="GO" id="GO:0000272">
    <property type="term" value="P:polysaccharide catabolic process"/>
    <property type="evidence" value="ECO:0007669"/>
    <property type="project" value="UniProtKB-KW"/>
</dbReference>
<dbReference type="Gene3D" id="2.70.50.70">
    <property type="match status" value="1"/>
</dbReference>
<dbReference type="PANTHER" id="PTHR36182:SF2">
    <property type="entry name" value="LYTIC POLYSACCHARIDE MONOOXYGENASE"/>
    <property type="match status" value="1"/>
</dbReference>
<dbReference type="PANTHER" id="PTHR36182">
    <property type="entry name" value="PROTEIN, PUTATIVE (AFU_ORTHOLOGUE AFUA_6G10930)-RELATED"/>
    <property type="match status" value="1"/>
</dbReference>